<dbReference type="EMBL" id="L42023">
    <property type="protein sequence ID" value="AAC23280.1"/>
    <property type="molecule type" value="Genomic_DNA"/>
</dbReference>
<dbReference type="RefSeq" id="NP_439777.1">
    <property type="nucleotide sequence ID" value="NC_000907.1"/>
</dbReference>
<dbReference type="SMR" id="P46456"/>
<dbReference type="STRING" id="71421.HI_1635"/>
<dbReference type="EnsemblBacteria" id="AAC23280">
    <property type="protein sequence ID" value="AAC23280"/>
    <property type="gene ID" value="HI_1635"/>
</dbReference>
<dbReference type="KEGG" id="hin:HI_1635"/>
<dbReference type="PATRIC" id="fig|71421.8.peg.1711"/>
<dbReference type="eggNOG" id="COG1609">
    <property type="taxonomic scope" value="Bacteria"/>
</dbReference>
<dbReference type="HOGENOM" id="CLU_037628_6_2_6"/>
<dbReference type="OrthoDB" id="9798934at2"/>
<dbReference type="PhylomeDB" id="P46456"/>
<dbReference type="BioCyc" id="HINF71421:G1GJ1-1652-MONOMER"/>
<dbReference type="UniPathway" id="UPA00488"/>
<dbReference type="Proteomes" id="UP000000579">
    <property type="component" value="Chromosome"/>
</dbReference>
<dbReference type="GO" id="GO:0003700">
    <property type="term" value="F:DNA-binding transcription factor activity"/>
    <property type="evidence" value="ECO:0000318"/>
    <property type="project" value="GO_Central"/>
</dbReference>
<dbReference type="GO" id="GO:0000976">
    <property type="term" value="F:transcription cis-regulatory region binding"/>
    <property type="evidence" value="ECO:0000318"/>
    <property type="project" value="GO_Central"/>
</dbReference>
<dbReference type="GO" id="GO:0045892">
    <property type="term" value="P:negative regulation of DNA-templated transcription"/>
    <property type="evidence" value="ECO:0007669"/>
    <property type="project" value="UniProtKB-UniRule"/>
</dbReference>
<dbReference type="GO" id="GO:0006164">
    <property type="term" value="P:purine nucleotide biosynthetic process"/>
    <property type="evidence" value="ECO:0007669"/>
    <property type="project" value="UniProtKB-UniPathway"/>
</dbReference>
<dbReference type="GO" id="GO:0006355">
    <property type="term" value="P:regulation of DNA-templated transcription"/>
    <property type="evidence" value="ECO:0000318"/>
    <property type="project" value="GO_Central"/>
</dbReference>
<dbReference type="CDD" id="cd01392">
    <property type="entry name" value="HTH_LacI"/>
    <property type="match status" value="1"/>
</dbReference>
<dbReference type="CDD" id="cd06275">
    <property type="entry name" value="PBP1_PurR"/>
    <property type="match status" value="1"/>
</dbReference>
<dbReference type="FunFam" id="1.10.260.40:FF:000002">
    <property type="entry name" value="HTH-type transcriptional repressor PurR"/>
    <property type="match status" value="1"/>
</dbReference>
<dbReference type="Gene3D" id="3.40.50.2300">
    <property type="match status" value="2"/>
</dbReference>
<dbReference type="Gene3D" id="1.10.260.40">
    <property type="entry name" value="lambda repressor-like DNA-binding domains"/>
    <property type="match status" value="1"/>
</dbReference>
<dbReference type="HAMAP" id="MF_01277">
    <property type="entry name" value="HTH_type_PurR"/>
    <property type="match status" value="1"/>
</dbReference>
<dbReference type="InterPro" id="IPR000843">
    <property type="entry name" value="HTH_LacI"/>
</dbReference>
<dbReference type="InterPro" id="IPR046335">
    <property type="entry name" value="LacI/GalR-like_sensor"/>
</dbReference>
<dbReference type="InterPro" id="IPR010982">
    <property type="entry name" value="Lambda_DNA-bd_dom_sf"/>
</dbReference>
<dbReference type="InterPro" id="IPR028082">
    <property type="entry name" value="Peripla_BP_I"/>
</dbReference>
<dbReference type="InterPro" id="IPR023588">
    <property type="entry name" value="Tscrpt_reg_HTH_PurR"/>
</dbReference>
<dbReference type="NCBIfam" id="NF007979">
    <property type="entry name" value="PRK10703.1"/>
    <property type="match status" value="1"/>
</dbReference>
<dbReference type="PANTHER" id="PTHR30146:SF148">
    <property type="entry name" value="HTH-TYPE TRANSCRIPTIONAL REPRESSOR PURR-RELATED"/>
    <property type="match status" value="1"/>
</dbReference>
<dbReference type="PANTHER" id="PTHR30146">
    <property type="entry name" value="LACI-RELATED TRANSCRIPTIONAL REPRESSOR"/>
    <property type="match status" value="1"/>
</dbReference>
<dbReference type="Pfam" id="PF00356">
    <property type="entry name" value="LacI"/>
    <property type="match status" value="1"/>
</dbReference>
<dbReference type="Pfam" id="PF13377">
    <property type="entry name" value="Peripla_BP_3"/>
    <property type="match status" value="1"/>
</dbReference>
<dbReference type="PRINTS" id="PR00036">
    <property type="entry name" value="HTHLACI"/>
</dbReference>
<dbReference type="SMART" id="SM00354">
    <property type="entry name" value="HTH_LACI"/>
    <property type="match status" value="1"/>
</dbReference>
<dbReference type="SUPFAM" id="SSF47413">
    <property type="entry name" value="lambda repressor-like DNA-binding domains"/>
    <property type="match status" value="1"/>
</dbReference>
<dbReference type="SUPFAM" id="SSF53822">
    <property type="entry name" value="Periplasmic binding protein-like I"/>
    <property type="match status" value="1"/>
</dbReference>
<dbReference type="PROSITE" id="PS00356">
    <property type="entry name" value="HTH_LACI_1"/>
    <property type="match status" value="1"/>
</dbReference>
<dbReference type="PROSITE" id="PS50932">
    <property type="entry name" value="HTH_LACI_2"/>
    <property type="match status" value="1"/>
</dbReference>
<feature type="chain" id="PRO_0000107979" description="HTH-type transcriptional repressor PurR">
    <location>
        <begin position="1"/>
        <end position="336"/>
    </location>
</feature>
<feature type="domain" description="HTH lacI-type" evidence="1">
    <location>
        <begin position="2"/>
        <end position="56"/>
    </location>
</feature>
<feature type="DNA-binding region" description="H-T-H motif" evidence="1">
    <location>
        <begin position="4"/>
        <end position="23"/>
    </location>
</feature>
<feature type="DNA-binding region" evidence="1">
    <location>
        <begin position="48"/>
        <end position="56"/>
    </location>
</feature>
<feature type="binding site" evidence="1">
    <location>
        <position position="73"/>
    </location>
    <ligand>
        <name>hypoxanthine</name>
        <dbReference type="ChEBI" id="CHEBI:17368"/>
    </ligand>
</feature>
<feature type="binding site" evidence="1">
    <location>
        <position position="188"/>
    </location>
    <ligand>
        <name>hypoxanthine</name>
        <dbReference type="ChEBI" id="CHEBI:17368"/>
    </ligand>
</feature>
<feature type="binding site" evidence="1">
    <location>
        <position position="190"/>
    </location>
    <ligand>
        <name>hypoxanthine</name>
        <dbReference type="ChEBI" id="CHEBI:17368"/>
    </ligand>
</feature>
<feature type="binding site" evidence="1">
    <location>
        <position position="219"/>
    </location>
    <ligand>
        <name>hypoxanthine</name>
        <dbReference type="ChEBI" id="CHEBI:17368"/>
    </ligand>
</feature>
<feature type="binding site" evidence="1">
    <location>
        <position position="273"/>
    </location>
    <ligand>
        <name>hypoxanthine</name>
        <dbReference type="ChEBI" id="CHEBI:17368"/>
    </ligand>
</feature>
<protein>
    <recommendedName>
        <fullName evidence="1">HTH-type transcriptional repressor PurR</fullName>
    </recommendedName>
    <alternativeName>
        <fullName evidence="1">Pur regulon repressor</fullName>
    </alternativeName>
    <alternativeName>
        <fullName evidence="1">Purine nucleotide synthesis repressor</fullName>
    </alternativeName>
</protein>
<organism>
    <name type="scientific">Haemophilus influenzae (strain ATCC 51907 / DSM 11121 / KW20 / Rd)</name>
    <dbReference type="NCBI Taxonomy" id="71421"/>
    <lineage>
        <taxon>Bacteria</taxon>
        <taxon>Pseudomonadati</taxon>
        <taxon>Pseudomonadota</taxon>
        <taxon>Gammaproteobacteria</taxon>
        <taxon>Pasteurellales</taxon>
        <taxon>Pasteurellaceae</taxon>
        <taxon>Haemophilus</taxon>
    </lineage>
</organism>
<evidence type="ECO:0000255" key="1">
    <source>
        <dbReference type="HAMAP-Rule" id="MF_01277"/>
    </source>
</evidence>
<proteinExistence type="inferred from homology"/>
<sequence length="336" mass="37508">MATIKDVAKMAGVSTTTVSHVINKTRFVAKDTEEAVLSAIKQLNYSPSAVARSLKVNTTKSIGMIVTTSEAPYFAEIIHSVEEHCYRQGYSLFCVTHKMDPEKVKNHLEMLAKKRVDGLLVMCSEYTQDSLDLLSSFSTIPMVVMDWGPNANTDVIDDHSFDGGYLATKHLIECGHKKIGIICGELNKTTARTRYEGFEKAMEEAKLTINPSWVLEGAFEPEDGYECMNRLLTQEKLPTALFCCNDVMALGAISALTEKGLRVPEDMSIIGYDDIHASRFYAPPLTTIHQSKLRLGRQAINILLERITHKDEGVQQYSRIDITPELIIRKSVKSIL</sequence>
<gene>
    <name evidence="1" type="primary">purR</name>
    <name type="ordered locus">HI_1635</name>
</gene>
<reference key="1">
    <citation type="journal article" date="1995" name="Science">
        <title>Whole-genome random sequencing and assembly of Haemophilus influenzae Rd.</title>
        <authorList>
            <person name="Fleischmann R.D."/>
            <person name="Adams M.D."/>
            <person name="White O."/>
            <person name="Clayton R.A."/>
            <person name="Kirkness E.F."/>
            <person name="Kerlavage A.R."/>
            <person name="Bult C.J."/>
            <person name="Tomb J.-F."/>
            <person name="Dougherty B.A."/>
            <person name="Merrick J.M."/>
            <person name="McKenney K."/>
            <person name="Sutton G.G."/>
            <person name="FitzHugh W."/>
            <person name="Fields C.A."/>
            <person name="Gocayne J.D."/>
            <person name="Scott J.D."/>
            <person name="Shirley R."/>
            <person name="Liu L.-I."/>
            <person name="Glodek A."/>
            <person name="Kelley J.M."/>
            <person name="Weidman J.F."/>
            <person name="Phillips C.A."/>
            <person name="Spriggs T."/>
            <person name="Hedblom E."/>
            <person name="Cotton M.D."/>
            <person name="Utterback T.R."/>
            <person name="Hanna M.C."/>
            <person name="Nguyen D.T."/>
            <person name="Saudek D.M."/>
            <person name="Brandon R.C."/>
            <person name="Fine L.D."/>
            <person name="Fritchman J.L."/>
            <person name="Fuhrmann J.L."/>
            <person name="Geoghagen N.S.M."/>
            <person name="Gnehm C.L."/>
            <person name="McDonald L.A."/>
            <person name="Small K.V."/>
            <person name="Fraser C.M."/>
            <person name="Smith H.O."/>
            <person name="Venter J.C."/>
        </authorList>
    </citation>
    <scope>NUCLEOTIDE SEQUENCE [LARGE SCALE GENOMIC DNA]</scope>
    <source>
        <strain>ATCC 51907 / DSM 11121 / KW20 / Rd</strain>
    </source>
</reference>
<reference key="2">
    <citation type="submission" date="1996-09" db="EMBL/GenBank/DDBJ databases">
        <authorList>
            <person name="White O."/>
            <person name="Clayton R.A."/>
            <person name="Kerlavage A.R."/>
            <person name="Fleischmann R.D."/>
        </authorList>
    </citation>
    <scope>SEQUENCE REVISION</scope>
</reference>
<keyword id="KW-0238">DNA-binding</keyword>
<keyword id="KW-0658">Purine biosynthesis</keyword>
<keyword id="KW-1185">Reference proteome</keyword>
<keyword id="KW-0678">Repressor</keyword>
<keyword id="KW-0804">Transcription</keyword>
<keyword id="KW-0805">Transcription regulation</keyword>
<accession>P46456</accession>
<comment type="function">
    <text evidence="1">Is the main repressor of the genes involved in the de novo synthesis of purine nucleotides, regulating purB, purC, purEK, purF, purHD, purL, purMN and guaBA expression. PurR is allosterically activated to bind its cognate DNA by binding the purine corepressors, hypoxanthine or guanine, thereby effecting transcription repression.</text>
</comment>
<comment type="pathway">
    <text>Purine metabolism; purine nucleotide biosynthesis [regulation].</text>
</comment>
<comment type="subunit">
    <text evidence="1">Homodimer.</text>
</comment>
<comment type="domain">
    <text evidence="1">Consists of two structural and functional domains: an N-terminal DNA-binding domain, approximately the first 60 residues, and a larger C-terminal domain, approximately 280 residues, which imparts the function of corepressor binding and oligomerization.</text>
</comment>
<name>PURR_HAEIN</name>